<sequence>MKPSIHSLTHQTMQEWVLEQGEKKFRADQIWEWLYRKRVQSFEEMTNLSKDLIAKLNDQFVVNPLKQGIVQESADGTVKYLFELPDGMLIETVLMRQHYGLSVCVTTQVGCNIGCTFCASGLIKKQRDLNNGEIVAQIMLVQKYFAERGQDERVNHIVVMGIGEPFDNYNNVLNFFRTINDDKGMAIGARHITVSTSGLAHKIRNFADEGVQVNLAVSLHAPNNELRSSIMKINRAFPIEKLFAAIEYYIETTNRRVTFEYIMLNEVNDGVEQALELAELLKNIKKLSYVNLIPYTPVSEHDQYSRSPKERVLAFYDTLKKKGVNCVVRQEHGTDIDAAYGQLRSNTMKRDRQKAVAAVNP</sequence>
<reference key="1">
    <citation type="journal article" date="2009" name="BMC Genomics">
        <title>Genome evolution driven by host adaptations results in a more virulent and antimicrobial-resistant Streptococcus pneumoniae serotype 14.</title>
        <authorList>
            <person name="Ding F."/>
            <person name="Tang P."/>
            <person name="Hsu M.-H."/>
            <person name="Cui P."/>
            <person name="Hu S."/>
            <person name="Yu J."/>
            <person name="Chiu C.-H."/>
        </authorList>
    </citation>
    <scope>NUCLEOTIDE SEQUENCE [LARGE SCALE GENOMIC DNA]</scope>
    <source>
        <strain>CGSP14</strain>
    </source>
</reference>
<gene>
    <name evidence="1" type="primary">rlmN</name>
    <name type="ordered locus">SPCG_0717</name>
</gene>
<name>RLMN_STRPS</name>
<keyword id="KW-0004">4Fe-4S</keyword>
<keyword id="KW-0963">Cytoplasm</keyword>
<keyword id="KW-0408">Iron</keyword>
<keyword id="KW-0411">Iron-sulfur</keyword>
<keyword id="KW-0479">Metal-binding</keyword>
<keyword id="KW-0489">Methyltransferase</keyword>
<keyword id="KW-0698">rRNA processing</keyword>
<keyword id="KW-0949">S-adenosyl-L-methionine</keyword>
<keyword id="KW-0808">Transferase</keyword>
<keyword id="KW-0819">tRNA processing</keyword>
<protein>
    <recommendedName>
        <fullName>Putative dual-specificity RNA methyltransferase RlmN</fullName>
        <ecNumber evidence="1">2.1.1.192</ecNumber>
    </recommendedName>
    <alternativeName>
        <fullName evidence="1">23S rRNA (adenine(2503)-C(2))-methyltransferase</fullName>
    </alternativeName>
    <alternativeName>
        <fullName evidence="1">23S rRNA m2A2503 methyltransferase</fullName>
    </alternativeName>
    <alternativeName>
        <fullName evidence="1">Ribosomal RNA large subunit methyltransferase N</fullName>
    </alternativeName>
    <alternativeName>
        <fullName evidence="1">tRNA (adenine(37)-C(2))-methyltransferase</fullName>
    </alternativeName>
    <alternativeName>
        <fullName evidence="1">tRNA m2A37 methyltransferase</fullName>
    </alternativeName>
</protein>
<comment type="function">
    <text evidence="1">Specifically methylates position 2 of adenine 2503 in 23S rRNA and position 2 of adenine 37 in tRNAs.</text>
</comment>
<comment type="catalytic activity">
    <reaction evidence="1">
        <text>adenosine(2503) in 23S rRNA + 2 reduced [2Fe-2S]-[ferredoxin] + 2 S-adenosyl-L-methionine = 2-methyladenosine(2503) in 23S rRNA + 5'-deoxyadenosine + L-methionine + 2 oxidized [2Fe-2S]-[ferredoxin] + S-adenosyl-L-homocysteine</text>
        <dbReference type="Rhea" id="RHEA:42916"/>
        <dbReference type="Rhea" id="RHEA-COMP:10000"/>
        <dbReference type="Rhea" id="RHEA-COMP:10001"/>
        <dbReference type="Rhea" id="RHEA-COMP:10152"/>
        <dbReference type="Rhea" id="RHEA-COMP:10282"/>
        <dbReference type="ChEBI" id="CHEBI:17319"/>
        <dbReference type="ChEBI" id="CHEBI:33737"/>
        <dbReference type="ChEBI" id="CHEBI:33738"/>
        <dbReference type="ChEBI" id="CHEBI:57844"/>
        <dbReference type="ChEBI" id="CHEBI:57856"/>
        <dbReference type="ChEBI" id="CHEBI:59789"/>
        <dbReference type="ChEBI" id="CHEBI:74411"/>
        <dbReference type="ChEBI" id="CHEBI:74497"/>
        <dbReference type="EC" id="2.1.1.192"/>
    </reaction>
</comment>
<comment type="catalytic activity">
    <reaction evidence="1">
        <text>adenosine(37) in tRNA + 2 reduced [2Fe-2S]-[ferredoxin] + 2 S-adenosyl-L-methionine = 2-methyladenosine(37) in tRNA + 5'-deoxyadenosine + L-methionine + 2 oxidized [2Fe-2S]-[ferredoxin] + S-adenosyl-L-homocysteine</text>
        <dbReference type="Rhea" id="RHEA:43332"/>
        <dbReference type="Rhea" id="RHEA-COMP:10000"/>
        <dbReference type="Rhea" id="RHEA-COMP:10001"/>
        <dbReference type="Rhea" id="RHEA-COMP:10162"/>
        <dbReference type="Rhea" id="RHEA-COMP:10485"/>
        <dbReference type="ChEBI" id="CHEBI:17319"/>
        <dbReference type="ChEBI" id="CHEBI:33737"/>
        <dbReference type="ChEBI" id="CHEBI:33738"/>
        <dbReference type="ChEBI" id="CHEBI:57844"/>
        <dbReference type="ChEBI" id="CHEBI:57856"/>
        <dbReference type="ChEBI" id="CHEBI:59789"/>
        <dbReference type="ChEBI" id="CHEBI:74411"/>
        <dbReference type="ChEBI" id="CHEBI:74497"/>
        <dbReference type="EC" id="2.1.1.192"/>
    </reaction>
</comment>
<comment type="cofactor">
    <cofactor evidence="1">
        <name>[4Fe-4S] cluster</name>
        <dbReference type="ChEBI" id="CHEBI:49883"/>
    </cofactor>
    <text evidence="1">Binds 1 [4Fe-4S] cluster. The cluster is coordinated with 3 cysteines and an exchangeable S-adenosyl-L-methionine.</text>
</comment>
<comment type="subcellular location">
    <subcellularLocation>
        <location evidence="1">Cytoplasm</location>
    </subcellularLocation>
</comment>
<comment type="similarity">
    <text evidence="1">Belongs to the radical SAM superfamily. RlmN family.</text>
</comment>
<comment type="caution">
    <text evidence="3">Tyr-340 is present instead of the conserved cysteine active site residue, a key catalytic residue that is methylated in the first step of the reaction mechanism. Therefore this protein may be inactive.</text>
</comment>
<dbReference type="EC" id="2.1.1.192" evidence="1"/>
<dbReference type="EMBL" id="CP001033">
    <property type="protein sequence ID" value="ACB89969.1"/>
    <property type="molecule type" value="Genomic_DNA"/>
</dbReference>
<dbReference type="RefSeq" id="WP_000804651.1">
    <property type="nucleotide sequence ID" value="NC_010582.1"/>
</dbReference>
<dbReference type="SMR" id="B2INF0"/>
<dbReference type="KEGG" id="spw:SPCG_0717"/>
<dbReference type="HOGENOM" id="CLU_029101_0_1_9"/>
<dbReference type="GO" id="GO:0005737">
    <property type="term" value="C:cytoplasm"/>
    <property type="evidence" value="ECO:0007669"/>
    <property type="project" value="UniProtKB-SubCell"/>
</dbReference>
<dbReference type="GO" id="GO:0051539">
    <property type="term" value="F:4 iron, 4 sulfur cluster binding"/>
    <property type="evidence" value="ECO:0007669"/>
    <property type="project" value="UniProtKB-UniRule"/>
</dbReference>
<dbReference type="GO" id="GO:0046872">
    <property type="term" value="F:metal ion binding"/>
    <property type="evidence" value="ECO:0007669"/>
    <property type="project" value="UniProtKB-KW"/>
</dbReference>
<dbReference type="GO" id="GO:0070040">
    <property type="term" value="F:rRNA (adenine(2503)-C2-)-methyltransferase activity"/>
    <property type="evidence" value="ECO:0007669"/>
    <property type="project" value="UniProtKB-UniRule"/>
</dbReference>
<dbReference type="GO" id="GO:0019843">
    <property type="term" value="F:rRNA binding"/>
    <property type="evidence" value="ECO:0007669"/>
    <property type="project" value="UniProtKB-UniRule"/>
</dbReference>
<dbReference type="GO" id="GO:0002935">
    <property type="term" value="F:tRNA (adenine(37)-C2)-methyltransferase activity"/>
    <property type="evidence" value="ECO:0007669"/>
    <property type="project" value="UniProtKB-UniRule"/>
</dbReference>
<dbReference type="GO" id="GO:0000049">
    <property type="term" value="F:tRNA binding"/>
    <property type="evidence" value="ECO:0007669"/>
    <property type="project" value="UniProtKB-UniRule"/>
</dbReference>
<dbReference type="GO" id="GO:0070475">
    <property type="term" value="P:rRNA base methylation"/>
    <property type="evidence" value="ECO:0007669"/>
    <property type="project" value="UniProtKB-UniRule"/>
</dbReference>
<dbReference type="GO" id="GO:0030488">
    <property type="term" value="P:tRNA methylation"/>
    <property type="evidence" value="ECO:0007669"/>
    <property type="project" value="UniProtKB-UniRule"/>
</dbReference>
<dbReference type="CDD" id="cd01335">
    <property type="entry name" value="Radical_SAM"/>
    <property type="match status" value="1"/>
</dbReference>
<dbReference type="FunFam" id="1.10.150.530:FF:000002">
    <property type="entry name" value="Probable dual-specificity RNA methyltransferase RlmN"/>
    <property type="match status" value="1"/>
</dbReference>
<dbReference type="FunFam" id="3.20.20.70:FF:000014">
    <property type="entry name" value="Probable dual-specificity RNA methyltransferase RlmN"/>
    <property type="match status" value="1"/>
</dbReference>
<dbReference type="Gene3D" id="1.10.150.530">
    <property type="match status" value="1"/>
</dbReference>
<dbReference type="Gene3D" id="3.20.20.70">
    <property type="entry name" value="Aldolase class I"/>
    <property type="match status" value="1"/>
</dbReference>
<dbReference type="HAMAP" id="MF_01849">
    <property type="entry name" value="RNA_methyltr_RlmN"/>
    <property type="match status" value="1"/>
</dbReference>
<dbReference type="InterPro" id="IPR013785">
    <property type="entry name" value="Aldolase_TIM"/>
</dbReference>
<dbReference type="InterPro" id="IPR040072">
    <property type="entry name" value="Methyltransferase_A"/>
</dbReference>
<dbReference type="InterPro" id="IPR048641">
    <property type="entry name" value="RlmN_N"/>
</dbReference>
<dbReference type="InterPro" id="IPR027492">
    <property type="entry name" value="RNA_MTrfase_RlmN"/>
</dbReference>
<dbReference type="InterPro" id="IPR004383">
    <property type="entry name" value="rRNA_lsu_MTrfase_RlmN/Cfr"/>
</dbReference>
<dbReference type="InterPro" id="IPR007197">
    <property type="entry name" value="rSAM"/>
</dbReference>
<dbReference type="NCBIfam" id="TIGR00048">
    <property type="entry name" value="rRNA_mod_RlmN"/>
    <property type="match status" value="1"/>
</dbReference>
<dbReference type="PANTHER" id="PTHR30544">
    <property type="entry name" value="23S RRNA METHYLTRANSFERASE"/>
    <property type="match status" value="1"/>
</dbReference>
<dbReference type="PANTHER" id="PTHR30544:SF5">
    <property type="entry name" value="RADICAL SAM CORE DOMAIN-CONTAINING PROTEIN"/>
    <property type="match status" value="1"/>
</dbReference>
<dbReference type="Pfam" id="PF04055">
    <property type="entry name" value="Radical_SAM"/>
    <property type="match status" value="1"/>
</dbReference>
<dbReference type="Pfam" id="PF21016">
    <property type="entry name" value="RlmN_N"/>
    <property type="match status" value="1"/>
</dbReference>
<dbReference type="PIRSF" id="PIRSF006004">
    <property type="entry name" value="CHP00048"/>
    <property type="match status" value="1"/>
</dbReference>
<dbReference type="SFLD" id="SFLDS00029">
    <property type="entry name" value="Radical_SAM"/>
    <property type="match status" value="1"/>
</dbReference>
<dbReference type="SUPFAM" id="SSF102114">
    <property type="entry name" value="Radical SAM enzymes"/>
    <property type="match status" value="1"/>
</dbReference>
<dbReference type="PROSITE" id="PS51918">
    <property type="entry name" value="RADICAL_SAM"/>
    <property type="match status" value="1"/>
</dbReference>
<feature type="chain" id="PRO_0000350455" description="Putative dual-specificity RNA methyltransferase RlmN">
    <location>
        <begin position="1"/>
        <end position="361"/>
    </location>
</feature>
<feature type="domain" description="Radical SAM core" evidence="2">
    <location>
        <begin position="97"/>
        <end position="329"/>
    </location>
</feature>
<feature type="active site" description="Proton acceptor" evidence="1">
    <location>
        <position position="91"/>
    </location>
</feature>
<feature type="binding site" evidence="1">
    <location>
        <position position="111"/>
    </location>
    <ligand>
        <name>[4Fe-4S] cluster</name>
        <dbReference type="ChEBI" id="CHEBI:49883"/>
        <note>4Fe-4S-S-AdoMet</note>
    </ligand>
</feature>
<feature type="binding site" evidence="1">
    <location>
        <position position="115"/>
    </location>
    <ligand>
        <name>[4Fe-4S] cluster</name>
        <dbReference type="ChEBI" id="CHEBI:49883"/>
        <note>4Fe-4S-S-AdoMet</note>
    </ligand>
</feature>
<feature type="binding site" evidence="1">
    <location>
        <position position="118"/>
    </location>
    <ligand>
        <name>[4Fe-4S] cluster</name>
        <dbReference type="ChEBI" id="CHEBI:49883"/>
        <note>4Fe-4S-S-AdoMet</note>
    </ligand>
</feature>
<feature type="binding site" evidence="1">
    <location>
        <begin position="163"/>
        <end position="164"/>
    </location>
    <ligand>
        <name>S-adenosyl-L-methionine</name>
        <dbReference type="ChEBI" id="CHEBI:59789"/>
    </ligand>
</feature>
<feature type="binding site" evidence="1">
    <location>
        <position position="195"/>
    </location>
    <ligand>
        <name>S-adenosyl-L-methionine</name>
        <dbReference type="ChEBI" id="CHEBI:59789"/>
    </ligand>
</feature>
<feature type="binding site" evidence="1">
    <location>
        <begin position="218"/>
        <end position="220"/>
    </location>
    <ligand>
        <name>S-adenosyl-L-methionine</name>
        <dbReference type="ChEBI" id="CHEBI:59789"/>
    </ligand>
</feature>
<feature type="binding site" evidence="1">
    <location>
        <position position="296"/>
    </location>
    <ligand>
        <name>S-adenosyl-L-methionine</name>
        <dbReference type="ChEBI" id="CHEBI:59789"/>
    </ligand>
</feature>
<organism>
    <name type="scientific">Streptococcus pneumoniae (strain CGSP14)</name>
    <dbReference type="NCBI Taxonomy" id="516950"/>
    <lineage>
        <taxon>Bacteria</taxon>
        <taxon>Bacillati</taxon>
        <taxon>Bacillota</taxon>
        <taxon>Bacilli</taxon>
        <taxon>Lactobacillales</taxon>
        <taxon>Streptococcaceae</taxon>
        <taxon>Streptococcus</taxon>
    </lineage>
</organism>
<proteinExistence type="inferred from homology"/>
<accession>B2INF0</accession>
<evidence type="ECO:0000255" key="1">
    <source>
        <dbReference type="HAMAP-Rule" id="MF_01849"/>
    </source>
</evidence>
<evidence type="ECO:0000255" key="2">
    <source>
        <dbReference type="PROSITE-ProRule" id="PRU01266"/>
    </source>
</evidence>
<evidence type="ECO:0000305" key="3"/>